<dbReference type="EC" id="3.4.24.-" evidence="1"/>
<dbReference type="EMBL" id="CP000158">
    <property type="protein sequence ID" value="ABI76906.1"/>
    <property type="molecule type" value="Genomic_DNA"/>
</dbReference>
<dbReference type="RefSeq" id="WP_011648335.1">
    <property type="nucleotide sequence ID" value="NC_008358.1"/>
</dbReference>
<dbReference type="SMR" id="Q0BWV3"/>
<dbReference type="STRING" id="228405.HNE_3367"/>
<dbReference type="KEGG" id="hne:HNE_3367"/>
<dbReference type="eggNOG" id="COG0501">
    <property type="taxonomic scope" value="Bacteria"/>
</dbReference>
<dbReference type="HOGENOM" id="CLU_042266_3_0_5"/>
<dbReference type="Proteomes" id="UP000001959">
    <property type="component" value="Chromosome"/>
</dbReference>
<dbReference type="GO" id="GO:0005886">
    <property type="term" value="C:plasma membrane"/>
    <property type="evidence" value="ECO:0007669"/>
    <property type="project" value="UniProtKB-SubCell"/>
</dbReference>
<dbReference type="GO" id="GO:0004222">
    <property type="term" value="F:metalloendopeptidase activity"/>
    <property type="evidence" value="ECO:0007669"/>
    <property type="project" value="UniProtKB-UniRule"/>
</dbReference>
<dbReference type="GO" id="GO:0008270">
    <property type="term" value="F:zinc ion binding"/>
    <property type="evidence" value="ECO:0007669"/>
    <property type="project" value="UniProtKB-UniRule"/>
</dbReference>
<dbReference type="GO" id="GO:0006508">
    <property type="term" value="P:proteolysis"/>
    <property type="evidence" value="ECO:0007669"/>
    <property type="project" value="UniProtKB-KW"/>
</dbReference>
<dbReference type="CDD" id="cd07336">
    <property type="entry name" value="M48B_HtpX_like"/>
    <property type="match status" value="1"/>
</dbReference>
<dbReference type="Gene3D" id="3.30.2010.10">
    <property type="entry name" value="Metalloproteases ('zincins'), catalytic domain"/>
    <property type="match status" value="1"/>
</dbReference>
<dbReference type="HAMAP" id="MF_00188">
    <property type="entry name" value="Pept_M48_protease_HtpX"/>
    <property type="match status" value="1"/>
</dbReference>
<dbReference type="InterPro" id="IPR050083">
    <property type="entry name" value="HtpX_protease"/>
</dbReference>
<dbReference type="InterPro" id="IPR022919">
    <property type="entry name" value="Pept_M48_protease_HtpX"/>
</dbReference>
<dbReference type="InterPro" id="IPR001915">
    <property type="entry name" value="Peptidase_M48"/>
</dbReference>
<dbReference type="NCBIfam" id="NF002363">
    <property type="entry name" value="PRK01345.1"/>
    <property type="match status" value="1"/>
</dbReference>
<dbReference type="PANTHER" id="PTHR43221">
    <property type="entry name" value="PROTEASE HTPX"/>
    <property type="match status" value="1"/>
</dbReference>
<dbReference type="PANTHER" id="PTHR43221:SF1">
    <property type="entry name" value="PROTEASE HTPX"/>
    <property type="match status" value="1"/>
</dbReference>
<dbReference type="Pfam" id="PF01435">
    <property type="entry name" value="Peptidase_M48"/>
    <property type="match status" value="1"/>
</dbReference>
<dbReference type="PROSITE" id="PS00142">
    <property type="entry name" value="ZINC_PROTEASE"/>
    <property type="match status" value="1"/>
</dbReference>
<proteinExistence type="inferred from homology"/>
<feature type="chain" id="PRO_1000020873" description="Protease HtpX homolog">
    <location>
        <begin position="1"/>
        <end position="297"/>
    </location>
</feature>
<feature type="transmembrane region" description="Helical" evidence="1">
    <location>
        <begin position="16"/>
        <end position="36"/>
    </location>
</feature>
<feature type="transmembrane region" description="Helical" evidence="1">
    <location>
        <begin position="147"/>
        <end position="167"/>
    </location>
</feature>
<feature type="transmembrane region" description="Helical" evidence="1">
    <location>
        <begin position="175"/>
        <end position="195"/>
    </location>
</feature>
<feature type="active site" evidence="1">
    <location>
        <position position="135"/>
    </location>
</feature>
<feature type="binding site" evidence="1">
    <location>
        <position position="134"/>
    </location>
    <ligand>
        <name>Zn(2+)</name>
        <dbReference type="ChEBI" id="CHEBI:29105"/>
        <note>catalytic</note>
    </ligand>
</feature>
<feature type="binding site" evidence="1">
    <location>
        <position position="138"/>
    </location>
    <ligand>
        <name>Zn(2+)</name>
        <dbReference type="ChEBI" id="CHEBI:29105"/>
        <note>catalytic</note>
    </ligand>
</feature>
<feature type="binding site" evidence="1">
    <location>
        <position position="200"/>
    </location>
    <ligand>
        <name>Zn(2+)</name>
        <dbReference type="ChEBI" id="CHEBI:29105"/>
        <note>catalytic</note>
    </ligand>
</feature>
<comment type="cofactor">
    <cofactor evidence="1">
        <name>Zn(2+)</name>
        <dbReference type="ChEBI" id="CHEBI:29105"/>
    </cofactor>
    <text evidence="1">Binds 1 zinc ion per subunit.</text>
</comment>
<comment type="subcellular location">
    <subcellularLocation>
        <location evidence="1">Cell inner membrane</location>
        <topology evidence="1">Multi-pass membrane protein</topology>
    </subcellularLocation>
</comment>
<comment type="similarity">
    <text evidence="1">Belongs to the peptidase M48B family.</text>
</comment>
<name>HTPX_HYPNA</name>
<keyword id="KW-0997">Cell inner membrane</keyword>
<keyword id="KW-1003">Cell membrane</keyword>
<keyword id="KW-0378">Hydrolase</keyword>
<keyword id="KW-0472">Membrane</keyword>
<keyword id="KW-0479">Metal-binding</keyword>
<keyword id="KW-0482">Metalloprotease</keyword>
<keyword id="KW-0645">Protease</keyword>
<keyword id="KW-1185">Reference proteome</keyword>
<keyword id="KW-0812">Transmembrane</keyword>
<keyword id="KW-1133">Transmembrane helix</keyword>
<keyword id="KW-0862">Zinc</keyword>
<organism>
    <name type="scientific">Hyphomonas neptunium (strain ATCC 15444)</name>
    <dbReference type="NCBI Taxonomy" id="228405"/>
    <lineage>
        <taxon>Bacteria</taxon>
        <taxon>Pseudomonadati</taxon>
        <taxon>Pseudomonadota</taxon>
        <taxon>Alphaproteobacteria</taxon>
        <taxon>Hyphomonadales</taxon>
        <taxon>Hyphomonadaceae</taxon>
        <taxon>Hyphomonas</taxon>
    </lineage>
</organism>
<gene>
    <name evidence="1" type="primary">htpX</name>
    <name type="ordered locus">HNE_3367</name>
</gene>
<accession>Q0BWV3</accession>
<evidence type="ECO:0000255" key="1">
    <source>
        <dbReference type="HAMAP-Rule" id="MF_00188"/>
    </source>
</evidence>
<protein>
    <recommendedName>
        <fullName evidence="1">Protease HtpX homolog</fullName>
        <ecNumber evidence="1">3.4.24.-</ecNumber>
    </recommendedName>
</protein>
<sequence length="297" mass="31612">MGTAKTFTLLAAMTAIFMAIGFLVGGMAGMILAFVVAAGMNVFAWWNSDKMVLRMQGAQEVLPDTKNPMLRAFGEDVARLAENAGLPAPRIYIIDTPQPNAFATGRNPQNAAVAATTGLLNMLNREEVAGVMAHELAHVQNRDTLTMTVTATLAGAIGMLANFALFFGRDRAGLIGSIAIMIFAPMAAALVQMAISRSREYVADKRGAEICGNPLWLASALEKIERGARSQINPYAERSPAMAHMYISNPLNGRGQDKLFSTHPSTANRVEALRRMAGEMGISGVAAPTARSSGPWG</sequence>
<reference key="1">
    <citation type="journal article" date="2006" name="J. Bacteriol.">
        <title>Comparative genomic evidence for a close relationship between the dimorphic prosthecate bacteria Hyphomonas neptunium and Caulobacter crescentus.</title>
        <authorList>
            <person name="Badger J.H."/>
            <person name="Hoover T.R."/>
            <person name="Brun Y.V."/>
            <person name="Weiner R.M."/>
            <person name="Laub M.T."/>
            <person name="Alexandre G."/>
            <person name="Mrazek J."/>
            <person name="Ren Q."/>
            <person name="Paulsen I.T."/>
            <person name="Nelson K.E."/>
            <person name="Khouri H.M."/>
            <person name="Radune D."/>
            <person name="Sosa J."/>
            <person name="Dodson R.J."/>
            <person name="Sullivan S.A."/>
            <person name="Rosovitz M.J."/>
            <person name="Madupu R."/>
            <person name="Brinkac L.M."/>
            <person name="Durkin A.S."/>
            <person name="Daugherty S.C."/>
            <person name="Kothari S.P."/>
            <person name="Giglio M.G."/>
            <person name="Zhou L."/>
            <person name="Haft D.H."/>
            <person name="Selengut J.D."/>
            <person name="Davidsen T.M."/>
            <person name="Yang Q."/>
            <person name="Zafar N."/>
            <person name="Ward N.L."/>
        </authorList>
    </citation>
    <scope>NUCLEOTIDE SEQUENCE [LARGE SCALE GENOMIC DNA]</scope>
    <source>
        <strain>ATCC 15444</strain>
    </source>
</reference>